<gene>
    <name type="primary">BMPR2</name>
    <name type="synonym">PPH1</name>
</gene>
<reference key="1">
    <citation type="journal article" date="1995" name="Mol. Cell. Biol.">
        <title>Human type II receptor for bone morphogenic proteins (BMPs): extension of the two-kinase receptor model to the BMPs.</title>
        <authorList>
            <person name="Liu F."/>
            <person name="Ventura F."/>
            <person name="Doody J."/>
            <person name="Massague J."/>
        </authorList>
    </citation>
    <scope>NUCLEOTIDE SEQUENCE [MRNA] (ISOFORM 2)</scope>
    <scope>ALTERNATIVE SPLICING</scope>
    <source>
        <tissue>Kidney</tissue>
    </source>
</reference>
<reference key="2">
    <citation type="journal article" date="1995" name="Proc. Natl. Acad. Sci. U.S.A.">
        <title>Cloning and characterization of a human type II receptor for bone morphogenetic proteins.</title>
        <authorList>
            <person name="Rosenzweig B.L."/>
            <person name="Imamura T."/>
            <person name="Okadome T."/>
            <person name="Cox G.N."/>
            <person name="Yamashita H."/>
            <person name="ten Dijke P."/>
            <person name="Heldin C."/>
            <person name="Miyazono K."/>
        </authorList>
    </citation>
    <scope>NUCLEOTIDE SEQUENCE [MRNA] (ISOFORM 1)</scope>
    <source>
        <tissue>Substantia nigra</tissue>
    </source>
</reference>
<reference key="3">
    <citation type="journal article" date="1995" name="J. Biol. Chem.">
        <title>Identification of a human type II receptor for bone morphogenetic protein-4 that forms differential heteromeric complexes with bone morphogenetic protein type I receptors.</title>
        <authorList>
            <person name="Nohno T."/>
            <person name="Ishikawa T."/>
            <person name="Saito T."/>
            <person name="Hosokawa K."/>
            <person name="Noji S."/>
            <person name="Wosing D.H."/>
            <person name="Rosenbaum J.S."/>
        </authorList>
    </citation>
    <scope>NUCLEOTIDE SEQUENCE [MRNA] (ISOFORM 1)</scope>
    <source>
        <tissue>Skin fibroblast</tissue>
    </source>
</reference>
<reference key="4">
    <citation type="journal article" date="1995" name="J. Biol. Chem.">
        <title>Cloning of a novel type II serine/threonine kinase receptor through interaction with the type I transforming growth factor-beta receptor.</title>
        <authorList>
            <person name="Kawabata M."/>
            <person name="Chytil A."/>
            <person name="Moses H.L."/>
        </authorList>
    </citation>
    <scope>NUCLEOTIDE SEQUENCE [MRNA] (ISOFORM 1)</scope>
</reference>
<reference key="5">
    <citation type="journal article" date="2005" name="Nature">
        <title>Generation and annotation of the DNA sequences of human chromosomes 2 and 4.</title>
        <authorList>
            <person name="Hillier L.W."/>
            <person name="Graves T.A."/>
            <person name="Fulton R.S."/>
            <person name="Fulton L.A."/>
            <person name="Pepin K.H."/>
            <person name="Minx P."/>
            <person name="Wagner-McPherson C."/>
            <person name="Layman D."/>
            <person name="Wylie K."/>
            <person name="Sekhon M."/>
            <person name="Becker M.C."/>
            <person name="Fewell G.A."/>
            <person name="Delehaunty K.D."/>
            <person name="Miner T.L."/>
            <person name="Nash W.E."/>
            <person name="Kremitzki C."/>
            <person name="Oddy L."/>
            <person name="Du H."/>
            <person name="Sun H."/>
            <person name="Bradshaw-Cordum H."/>
            <person name="Ali J."/>
            <person name="Carter J."/>
            <person name="Cordes M."/>
            <person name="Harris A."/>
            <person name="Isak A."/>
            <person name="van Brunt A."/>
            <person name="Nguyen C."/>
            <person name="Du F."/>
            <person name="Courtney L."/>
            <person name="Kalicki J."/>
            <person name="Ozersky P."/>
            <person name="Abbott S."/>
            <person name="Armstrong J."/>
            <person name="Belter E.A."/>
            <person name="Caruso L."/>
            <person name="Cedroni M."/>
            <person name="Cotton M."/>
            <person name="Davidson T."/>
            <person name="Desai A."/>
            <person name="Elliott G."/>
            <person name="Erb T."/>
            <person name="Fronick C."/>
            <person name="Gaige T."/>
            <person name="Haakenson W."/>
            <person name="Haglund K."/>
            <person name="Holmes A."/>
            <person name="Harkins R."/>
            <person name="Kim K."/>
            <person name="Kruchowski S.S."/>
            <person name="Strong C.M."/>
            <person name="Grewal N."/>
            <person name="Goyea E."/>
            <person name="Hou S."/>
            <person name="Levy A."/>
            <person name="Martinka S."/>
            <person name="Mead K."/>
            <person name="McLellan M.D."/>
            <person name="Meyer R."/>
            <person name="Randall-Maher J."/>
            <person name="Tomlinson C."/>
            <person name="Dauphin-Kohlberg S."/>
            <person name="Kozlowicz-Reilly A."/>
            <person name="Shah N."/>
            <person name="Swearengen-Shahid S."/>
            <person name="Snider J."/>
            <person name="Strong J.T."/>
            <person name="Thompson J."/>
            <person name="Yoakum M."/>
            <person name="Leonard S."/>
            <person name="Pearman C."/>
            <person name="Trani L."/>
            <person name="Radionenko M."/>
            <person name="Waligorski J.E."/>
            <person name="Wang C."/>
            <person name="Rock S.M."/>
            <person name="Tin-Wollam A.-M."/>
            <person name="Maupin R."/>
            <person name="Latreille P."/>
            <person name="Wendl M.C."/>
            <person name="Yang S.-P."/>
            <person name="Pohl C."/>
            <person name="Wallis J.W."/>
            <person name="Spieth J."/>
            <person name="Bieri T.A."/>
            <person name="Berkowicz N."/>
            <person name="Nelson J.O."/>
            <person name="Osborne J."/>
            <person name="Ding L."/>
            <person name="Meyer R."/>
            <person name="Sabo A."/>
            <person name="Shotland Y."/>
            <person name="Sinha P."/>
            <person name="Wohldmann P.E."/>
            <person name="Cook L.L."/>
            <person name="Hickenbotham M.T."/>
            <person name="Eldred J."/>
            <person name="Williams D."/>
            <person name="Jones T.A."/>
            <person name="She X."/>
            <person name="Ciccarelli F.D."/>
            <person name="Izaurralde E."/>
            <person name="Taylor J."/>
            <person name="Schmutz J."/>
            <person name="Myers R.M."/>
            <person name="Cox D.R."/>
            <person name="Huang X."/>
            <person name="McPherson J.D."/>
            <person name="Mardis E.R."/>
            <person name="Clifton S.W."/>
            <person name="Warren W.C."/>
            <person name="Chinwalla A.T."/>
            <person name="Eddy S.R."/>
            <person name="Marra M.A."/>
            <person name="Ovcharenko I."/>
            <person name="Furey T.S."/>
            <person name="Miller W."/>
            <person name="Eichler E.E."/>
            <person name="Bork P."/>
            <person name="Suyama M."/>
            <person name="Torrents D."/>
            <person name="Waterston R.H."/>
            <person name="Wilson R.K."/>
        </authorList>
    </citation>
    <scope>NUCLEOTIDE SEQUENCE [LARGE SCALE GENOMIC DNA]</scope>
</reference>
<reference key="6">
    <citation type="submission" date="2005-07" db="EMBL/GenBank/DDBJ databases">
        <authorList>
            <person name="Mural R.J."/>
            <person name="Istrail S."/>
            <person name="Sutton G."/>
            <person name="Florea L."/>
            <person name="Halpern A.L."/>
            <person name="Mobarry C.M."/>
            <person name="Lippert R."/>
            <person name="Walenz B."/>
            <person name="Shatkay H."/>
            <person name="Dew I."/>
            <person name="Miller J.R."/>
            <person name="Flanigan M.J."/>
            <person name="Edwards N.J."/>
            <person name="Bolanos R."/>
            <person name="Fasulo D."/>
            <person name="Halldorsson B.V."/>
            <person name="Hannenhalli S."/>
            <person name="Turner R."/>
            <person name="Yooseph S."/>
            <person name="Lu F."/>
            <person name="Nusskern D.R."/>
            <person name="Shue B.C."/>
            <person name="Zheng X.H."/>
            <person name="Zhong F."/>
            <person name="Delcher A.L."/>
            <person name="Huson D.H."/>
            <person name="Kravitz S.A."/>
            <person name="Mouchard L."/>
            <person name="Reinert K."/>
            <person name="Remington K.A."/>
            <person name="Clark A.G."/>
            <person name="Waterman M.S."/>
            <person name="Eichler E.E."/>
            <person name="Adams M.D."/>
            <person name="Hunkapiller M.W."/>
            <person name="Myers E.W."/>
            <person name="Venter J.C."/>
        </authorList>
    </citation>
    <scope>NUCLEOTIDE SEQUENCE [LARGE SCALE GENOMIC DNA]</scope>
</reference>
<reference key="7">
    <citation type="journal article" date="2004" name="Genome Res.">
        <title>The status, quality, and expansion of the NIH full-length cDNA project: the Mammalian Gene Collection (MGC).</title>
        <authorList>
            <consortium name="The MGC Project Team"/>
        </authorList>
    </citation>
    <scope>NUCLEOTIDE SEQUENCE [LARGE SCALE MRNA] (ISOFORMS 1 AND 2)</scope>
    <source>
        <tissue>Skin</tissue>
    </source>
</reference>
<reference key="8">
    <citation type="journal article" date="2008" name="Mol. Cell">
        <title>Kinase-selective enrichment enables quantitative phosphoproteomics of the kinome across the cell cycle.</title>
        <authorList>
            <person name="Daub H."/>
            <person name="Olsen J.V."/>
            <person name="Bairlein M."/>
            <person name="Gnad F."/>
            <person name="Oppermann F.S."/>
            <person name="Korner R."/>
            <person name="Greff Z."/>
            <person name="Keri G."/>
            <person name="Stemmann O."/>
            <person name="Mann M."/>
        </authorList>
    </citation>
    <scope>PHOSPHORYLATION [LARGE SCALE ANALYSIS] AT SER-586</scope>
    <scope>IDENTIFICATION BY MASS SPECTROMETRY [LARGE SCALE ANALYSIS]</scope>
    <source>
        <tissue>Cervix carcinoma</tissue>
    </source>
</reference>
<reference key="9">
    <citation type="journal article" date="2009" name="Mol. Cell. Proteomics">
        <title>Large-scale proteomics analysis of the human kinome.</title>
        <authorList>
            <person name="Oppermann F.S."/>
            <person name="Gnad F."/>
            <person name="Olsen J.V."/>
            <person name="Hornberger R."/>
            <person name="Greff Z."/>
            <person name="Keri G."/>
            <person name="Mann M."/>
            <person name="Daub H."/>
        </authorList>
    </citation>
    <scope>PHOSPHORYLATION [LARGE SCALE ANALYSIS] AT THR-379</scope>
    <scope>IDENTIFICATION BY MASS SPECTROMETRY [LARGE SCALE ANALYSIS]</scope>
</reference>
<reference key="10">
    <citation type="journal article" date="2011" name="Mol. Cell. Biol.">
        <title>TSC-22 promotes transforming growth factor beta-mediated cardiac myofibroblast differentiation by antagonizing Smad7 activity.</title>
        <authorList>
            <person name="Yan X."/>
            <person name="Zhang J."/>
            <person name="Pan L."/>
            <person name="Wang P."/>
            <person name="Xue H."/>
            <person name="Zhang L."/>
            <person name="Gao X."/>
            <person name="Zhao X."/>
            <person name="Ning Y."/>
            <person name="Chen Y.G."/>
        </authorList>
    </citation>
    <scope>INTERACTION WITH TSC22D1</scope>
</reference>
<reference key="11">
    <citation type="journal article" date="2012" name="J. Bone Miner. Res.">
        <title>New insights into the molecular mechanism of multiple synostoses syndrome (SYNS): mutation within the GDF5 knuckle epitope causes noggin-resistance.</title>
        <authorList>
            <person name="Schwaerzer G.K."/>
            <person name="Hiepen C."/>
            <person name="Schrewe H."/>
            <person name="Nickel J."/>
            <person name="Ploeger F."/>
            <person name="Sebald W."/>
            <person name="Mueller T."/>
            <person name="Knaus P."/>
        </authorList>
    </citation>
    <scope>INTERACTION WITH GDF5</scope>
</reference>
<reference key="12">
    <citation type="journal article" date="2013" name="Cell. Signal.">
        <title>Activins bind and signal via bone morphogenetic protein receptor type II (BMPR2) in immortalized gonadotrope-like cells.</title>
        <authorList>
            <person name="Rejon C.A."/>
            <person name="Hancock M.A."/>
            <person name="Li Y.N."/>
            <person name="Thompson T.B."/>
            <person name="Hebert T.E."/>
            <person name="Bernard D.J."/>
        </authorList>
    </citation>
    <scope>FUNCTION</scope>
    <scope>INTERACTION WITH ACTIVIN A/INHBA</scope>
</reference>
<reference key="13">
    <citation type="journal article" date="2017" name="Cell. Physiol. Biochem.">
        <title>Fstl1 Promotes Glioma Growth Through the BMP4/Smad1/5/8 Signaling Pathway.</title>
        <authorList>
            <person name="Jin X."/>
            <person name="Nie E."/>
            <person name="Zhou X."/>
            <person name="Zeng A."/>
            <person name="Yu T."/>
            <person name="Zhi T."/>
            <person name="Jiang K."/>
            <person name="Wang Y."/>
            <person name="Zhang J."/>
            <person name="You Y."/>
        </authorList>
    </citation>
    <scope>INTERACTION WITH BMP4</scope>
</reference>
<reference key="14">
    <citation type="journal article" date="2014" name="J. Proteomics">
        <title>An enzyme assisted RP-RPLC approach for in-depth analysis of human liver phosphoproteome.</title>
        <authorList>
            <person name="Bian Y."/>
            <person name="Song C."/>
            <person name="Cheng K."/>
            <person name="Dong M."/>
            <person name="Wang F."/>
            <person name="Huang J."/>
            <person name="Sun D."/>
            <person name="Wang L."/>
            <person name="Ye M."/>
            <person name="Zou H."/>
        </authorList>
    </citation>
    <scope>IDENTIFICATION BY MASS SPECTROMETRY [LARGE SCALE ANALYSIS]</scope>
    <source>
        <tissue>Liver</tissue>
    </source>
</reference>
<reference key="15">
    <citation type="journal article" date="2021" name="Am. J. Hum. Genet.">
        <title>SCUBE3 loss-of-function causes a recognizable recessive developmental disorder due to defective bone morphogenetic protein signaling.</title>
        <authorList>
            <consortium name="Genomics England Research Consortium"/>
            <person name="Lin Y.C."/>
            <person name="Niceta M."/>
            <person name="Muto V."/>
            <person name="Vona B."/>
            <person name="Pagnamenta A.T."/>
            <person name="Maroofian R."/>
            <person name="Beetz C."/>
            <person name="van Duyvenvoorde H."/>
            <person name="Dentici M.L."/>
            <person name="Lauffer P."/>
            <person name="Vallian S."/>
            <person name="Ciolfi A."/>
            <person name="Pizzi S."/>
            <person name="Bauer P."/>
            <person name="Gruening N.M."/>
            <person name="Bellacchio E."/>
            <person name="Del Fattore A."/>
            <person name="Petrini S."/>
            <person name="Shaheen R."/>
            <person name="Tiosano D."/>
            <person name="Halloun R."/>
            <person name="Pode-Shakked B."/>
            <person name="Albayrak H.M."/>
            <person name="Isik E."/>
            <person name="Wit J.M."/>
            <person name="Dittrich M."/>
            <person name="Freire B.L."/>
            <person name="Bertola D.R."/>
            <person name="Jorge A.A.L."/>
            <person name="Barel O."/>
            <person name="Sabir A.H."/>
            <person name="Al Tenaiji A.M.J."/>
            <person name="Taji S.M."/>
            <person name="Al-Sannaa N."/>
            <person name="Al-Abdulwahed H."/>
            <person name="Digilio M.C."/>
            <person name="Irving M."/>
            <person name="Anikster Y."/>
            <person name="Bhavani G.S.L."/>
            <person name="Girisha K.M."/>
            <person name="Haaf T."/>
            <person name="Taylor J.C."/>
            <person name="Dallapiccola B."/>
            <person name="Alkuraya F.S."/>
            <person name="Yang R.B."/>
            <person name="Tartaglia M."/>
        </authorList>
    </citation>
    <scope>INTERACTION WITH SCUBE3</scope>
</reference>
<reference key="16">
    <citation type="journal article" date="2006" name="Biochem. Biophys. Res. Commun.">
        <title>High resolution structures of the bone morphogenetic protein type II receptor in two crystal forms: implications for ligand binding.</title>
        <authorList>
            <person name="Mace P.D."/>
            <person name="Cutfield J.F."/>
            <person name="Cutfield S.M."/>
        </authorList>
    </citation>
    <scope>X-RAY CRYSTALLOGRAPHY (1.45 ANGSTROMS) OF 33-131</scope>
    <scope>DISULFIDE BONDS</scope>
</reference>
<reference key="17">
    <citation type="submission" date="2009-02" db="PDB data bank">
        <title>Crystal structure of the BMPR2 kinase domain.</title>
        <authorList>
            <consortium name="Structural genomics consortium (SGC)"/>
        </authorList>
    </citation>
    <scope>X-RAY CRYSTALLOGRAPHY (2.35 ANGSTROMS) OF 189-517 IN COMPLEX WITH ADP</scope>
</reference>
<reference key="18">
    <citation type="journal article" date="2000" name="Am. J. Hum. Genet.">
        <title>Familial primary pulmonary hypertension (gene PPH1) is caused by mutations in the bone morphogenetic protein receptor-II gene.</title>
        <authorList>
            <person name="Deng Z."/>
            <person name="Morse J.H."/>
            <person name="Slager S.L."/>
            <person name="Cuervo N."/>
            <person name="Moore K.J."/>
            <person name="Venetos G."/>
            <person name="Kalachikov S."/>
            <person name="Cayanis E."/>
            <person name="Fischer S.G."/>
            <person name="Barst R.J."/>
            <person name="Hodge S.E."/>
            <person name="Knowles J.A."/>
        </authorList>
    </citation>
    <scope>VARIANTS PPH1 GLN-491 AND TRP-491</scope>
</reference>
<reference key="19">
    <citation type="journal article" date="2000" name="J. Med. Genet.">
        <title>Sporadic primary pulmonary hypertension is associated with germline mutations of the gene encoding BMPR-II, a receptor member of the TGF-beta family.</title>
        <authorList>
            <person name="Thomson J.R."/>
            <person name="Machado R.D."/>
            <person name="Pauciulo M.W."/>
            <person name="Morgan N.V."/>
            <person name="Humbert M."/>
            <person name="Elliott G.C."/>
            <person name="Ward K."/>
            <person name="Yacoub M."/>
            <person name="Mikhail G."/>
            <person name="Rogers P."/>
            <person name="Newman J.H."/>
            <person name="Wheeler L."/>
            <person name="Higenbottam T."/>
            <person name="Gibbs J.S.R."/>
            <person name="Egan J."/>
            <person name="Crozier A."/>
            <person name="Peacock A."/>
            <person name="Allcock R."/>
            <person name="Corris P."/>
            <person name="Loyd J.E."/>
            <person name="Trembath R.C."/>
            <person name="Nichols W.C."/>
        </authorList>
    </citation>
    <scope>VARIANTS PPH1 TYR-60; TYR-117 AND ARG-483</scope>
</reference>
<reference key="20">
    <citation type="journal article" date="2000" name="Nat. Genet.">
        <title>Heterozygous germline mutations in BMPR2, encoding a TGF-beta receptor, cause familial primary pulmonary hypertension.</title>
        <authorList>
            <person name="Lane K.B."/>
            <person name="Machado R.D."/>
            <person name="Pauciulo M.W."/>
            <person name="Thomson J.R."/>
            <person name="Phillips J.A. III"/>
            <person name="Loyd J.E."/>
            <person name="Nichols W.C."/>
            <person name="Trembath R.C."/>
            <person name="Aldred M."/>
            <person name="Brannon C.A."/>
            <person name="Conneally P.M."/>
            <person name="Foroud T."/>
            <person name="Fretwell N."/>
            <person name="Gaddipati R."/>
            <person name="Koller D."/>
            <person name="Loyd E.J."/>
            <person name="Morgan N.V."/>
            <person name="Newman J.H."/>
            <person name="Prince M.A."/>
            <person name="Vilarino Gueell C."/>
            <person name="Wheeler L."/>
        </authorList>
    </citation>
    <scope>VARIANTS PPH1 TRP-118; TYR-347 AND GLY-485</scope>
</reference>
<reference key="21">
    <citation type="journal article" date="2001" name="Am. J. Hum. Genet.">
        <title>BMPR2 haploinsufficiency as the inherited molecular mechanism for primary pulmonary hypertension.</title>
        <authorList>
            <person name="Machado R.D."/>
            <person name="Pauciulo M.W."/>
            <person name="Thomson J.R."/>
            <person name="Lane K.B."/>
            <person name="Morgan N.V."/>
            <person name="Wheeler L."/>
            <person name="Phillips J.A. III"/>
            <person name="Newman J.H."/>
            <person name="Williams D."/>
            <person name="Galie N."/>
            <person name="Manes A."/>
            <person name="McNeil K."/>
            <person name="Yacoub M."/>
            <person name="Mikhail G."/>
            <person name="Rogers P."/>
            <person name="Corris P."/>
            <person name="Humbert M."/>
            <person name="Donnai D."/>
            <person name="Martensson G."/>
            <person name="Tranebjaerg L."/>
            <person name="Loyd J.E."/>
            <person name="Trembath R.C."/>
            <person name="Nichols W.C."/>
        </authorList>
    </citation>
    <scope>VARIANTS PPH1 ARG-123; SER-123; ARG-420 AND THR-512</scope>
    <scope>VARIANT ASP-224</scope>
    <scope>CHARACTERIZATION OF VARIANT PPH1 GLY-485</scope>
</reference>
<reference key="22">
    <citation type="journal article" date="2002" name="Eur. Respir. J.">
        <title>BMPR2 germline mutations in pulmonary hypertension associated with fenfluramine derivatives.</title>
        <authorList>
            <person name="Humbert M."/>
            <person name="Deng Z."/>
            <person name="Simonneau G."/>
            <person name="Barst R.J."/>
            <person name="Sitbon O."/>
            <person name="Wolf M."/>
            <person name="Cuervo N."/>
            <person name="Moore K.J."/>
            <person name="Hodge S.E."/>
            <person name="Knowles J.A."/>
            <person name="Morse J.H."/>
        </authorList>
    </citation>
    <scope>VARIANTS PPH1 HIS-82; ASP-182 AND ARG-483</scope>
</reference>
<reference key="23">
    <citation type="journal article" date="2002" name="Hum. Mol. Genet.">
        <title>Functional analysis of bone morphogenetic protein type II receptor mutations underlying primary pulmonary hypertension.</title>
        <authorList>
            <person name="Rudarakanchana N."/>
            <person name="Flanagan J.A."/>
            <person name="Chen H."/>
            <person name="Upton P.D."/>
            <person name="Machado R."/>
            <person name="Patel D."/>
            <person name="Trembath R.C."/>
            <person name="Morrell N.W."/>
        </authorList>
    </citation>
    <scope>CHARACTERIZATION OF VARIANTS PPH1 TYR-60; TYR-117; TRP-118; ARG-123; SER-123; TYR-347; ARG-420; ARG-483; GLY-485; GLN-491; TRP-491; THR-512 AND LYS-519</scope>
    <scope>FUNCTION</scope>
</reference>
<reference key="24">
    <citation type="journal article" date="2003" name="Am. J. Respir. Crit. Care Med.">
        <title>Pulmonary veno-occlusive disease caused by an inherited mutation in bone morphogenetic protein receptor II.</title>
        <authorList>
            <person name="Runo J.R."/>
            <person name="Vnencak-Jones C.L."/>
            <person name="Prince M."/>
            <person name="Loyd J.E."/>
            <person name="Wheeler L."/>
            <person name="Robbins I.M."/>
            <person name="Lane K.B."/>
            <person name="Newman J.H."/>
            <person name="Johnson J."/>
            <person name="Nichols W.C."/>
            <person name="Phillips J.A. III"/>
        </authorList>
    </citation>
    <scope>INVOLVEMENT IN PVOD1</scope>
</reference>
<reference key="25">
    <citation type="journal article" date="2005" name="Hum. Mutat.">
        <title>BMPR2 mutations have short lifetime expectancy in primary pulmonary hypertension.</title>
        <authorList>
            <person name="Sankelo M."/>
            <person name="Flanagan J.A."/>
            <person name="Machado R."/>
            <person name="Harrison R."/>
            <person name="Rudarakanchana N."/>
            <person name="Morrell N."/>
            <person name="Dixon M."/>
            <person name="Halme M."/>
            <person name="Puolijoki H."/>
            <person name="Kere J."/>
            <person name="Elomaa O."/>
            <person name="Kupari M."/>
            <person name="Raeisaenen-Sokolowski A."/>
            <person name="Trembath R.C."/>
            <person name="Laitinen T."/>
        </authorList>
    </citation>
    <scope>VARIANT PPH1 PRO-899</scope>
    <scope>CHARACTERIZATION OF VARIANT PPH1 PRO-899</scope>
</reference>
<reference key="26">
    <citation type="journal article" date="2006" name="Hum. Mutat.">
        <title>Mutations of the TGF-beta type II receptor BMPR2 in pulmonary arterial hypertension.</title>
        <authorList>
            <person name="Machado R.D."/>
            <person name="Aldred M.A."/>
            <person name="James V."/>
            <person name="Harrison R.E."/>
            <person name="Patel B."/>
            <person name="Schwalbe E.C."/>
            <person name="Gruenig E."/>
            <person name="Janssen B."/>
            <person name="Koehler R."/>
            <person name="Seeger W."/>
            <person name="Eickelberg O."/>
            <person name="Olschewski H."/>
            <person name="Elliott C.G."/>
            <person name="Glissmeyer E."/>
            <person name="Carlquist J."/>
            <person name="Kim M."/>
            <person name="Torbicki A."/>
            <person name="Fijalkowska A."/>
            <person name="Szewczyk G."/>
            <person name="Parma J."/>
            <person name="Abramowicz M.J."/>
            <person name="Galie N."/>
            <person name="Morisaki H."/>
            <person name="Kyotani S."/>
            <person name="Nakanishi N."/>
            <person name="Morisaki T."/>
            <person name="Humbert M."/>
            <person name="Simonneau G."/>
            <person name="Sitbon O."/>
            <person name="Soubrier F."/>
            <person name="Coulet F."/>
            <person name="Morrell N.W."/>
            <person name="Trembath R.C."/>
        </authorList>
    </citation>
    <scope>INVOLVEMENT IN PVOD1</scope>
</reference>
<reference key="27">
    <citation type="journal article" date="2007" name="Nature">
        <title>Patterns of somatic mutation in human cancer genomes.</title>
        <authorList>
            <person name="Greenman C."/>
            <person name="Stephens P."/>
            <person name="Smith R."/>
            <person name="Dalgliesh G.L."/>
            <person name="Hunter C."/>
            <person name="Bignell G."/>
            <person name="Davies H."/>
            <person name="Teague J."/>
            <person name="Butler A."/>
            <person name="Stevens C."/>
            <person name="Edkins S."/>
            <person name="O'Meara S."/>
            <person name="Vastrik I."/>
            <person name="Schmidt E.E."/>
            <person name="Avis T."/>
            <person name="Barthorpe S."/>
            <person name="Bhamra G."/>
            <person name="Buck G."/>
            <person name="Choudhury B."/>
            <person name="Clements J."/>
            <person name="Cole J."/>
            <person name="Dicks E."/>
            <person name="Forbes S."/>
            <person name="Gray K."/>
            <person name="Halliday K."/>
            <person name="Harrison R."/>
            <person name="Hills K."/>
            <person name="Hinton J."/>
            <person name="Jenkinson A."/>
            <person name="Jones D."/>
            <person name="Menzies A."/>
            <person name="Mironenko T."/>
            <person name="Perry J."/>
            <person name="Raine K."/>
            <person name="Richardson D."/>
            <person name="Shepherd R."/>
            <person name="Small A."/>
            <person name="Tofts C."/>
            <person name="Varian J."/>
            <person name="Webb T."/>
            <person name="West S."/>
            <person name="Widaa S."/>
            <person name="Yates A."/>
            <person name="Cahill D.P."/>
            <person name="Louis D.N."/>
            <person name="Goldstraw P."/>
            <person name="Nicholson A.G."/>
            <person name="Brasseur F."/>
            <person name="Looijenga L."/>
            <person name="Weber B.L."/>
            <person name="Chiew Y.-E."/>
            <person name="DeFazio A."/>
            <person name="Greaves M.F."/>
            <person name="Green A.R."/>
            <person name="Campbell P."/>
            <person name="Birney E."/>
            <person name="Easton D.F."/>
            <person name="Chenevix-Trench G."/>
            <person name="Tan M.-H."/>
            <person name="Khoo S.K."/>
            <person name="Teh B.T."/>
            <person name="Yuen S.T."/>
            <person name="Leung S.Y."/>
            <person name="Wooster R."/>
            <person name="Futreal P.A."/>
            <person name="Stratton M.R."/>
        </authorList>
    </citation>
    <scope>VARIANT [LARGE SCALE ANALYSIS] ASN-775</scope>
</reference>
<reference key="28">
    <citation type="journal article" date="2014" name="PLoS ONE">
        <title>Novel mutations in BMPR2, ACVRL1 and KCNA5 genes and hemodynamic parameters in patients with pulmonary arterial hypertension.</title>
        <authorList>
            <person name="Pousada G."/>
            <person name="Baloira A."/>
            <person name="Vilarino C."/>
            <person name="Cifrian J.M."/>
            <person name="Valverde D."/>
        </authorList>
    </citation>
    <scope>VARIANTS PPH1 LEU-77; PHE-84; TYR-87; LEU-92; PRO-162; ASN-264 AND MET-341</scope>
    <scope>VARIANT ASN-775</scope>
</reference>
<reference key="29">
    <citation type="journal article" date="2014" name="PLoS ONE">
        <title>Functional changes in pulmonary arterial endothelial cells associated with BMPR2 mutations.</title>
        <authorList>
            <person name="Wang H."/>
            <person name="Ji R."/>
            <person name="Meng J."/>
            <person name="Cui Q."/>
            <person name="Zou W."/>
            <person name="Li L."/>
            <person name="Wang G."/>
            <person name="Sun L."/>
            <person name="Li Z."/>
            <person name="Huo L."/>
            <person name="Fan Y."/>
            <person name="Penny D.J."/>
        </authorList>
    </citation>
    <scope>VARIANTS PPH1 CYS-67 AND ASN-863</scope>
    <scope>CHARACTERIZATION OF VARIANTS PPH1 CYS-67 AND ASN-863</scope>
    <scope>SUBCELLULAR LOCATION</scope>
</reference>
<reference key="30">
    <citation type="journal article" date="2017" name="Sci. Rep.">
        <title>Molecular and functional characterization of the BMPR2 gene in Pulmonary Arterial Hypertension.</title>
        <authorList>
            <person name="Pousada G."/>
            <person name="Lupo V."/>
            <person name="Castro-Sanchez S."/>
            <person name="Alvarez-Satta M."/>
            <person name="Sanchez-Monteagudo A."/>
            <person name="Baloira A."/>
            <person name="Espinos C."/>
            <person name="Valverde D."/>
        </authorList>
    </citation>
    <scope>VARIANTS PPH1 ARG-64; PHE-84; HIS-109; ALA-138; 218-TYR--LEU-1038 DEL; GLY-248; 298-TRP--LEU-1038 DEL AND ARG-467</scope>
    <scope>CHARACTERIZATION OF VARIANTS PPH1 ARG-64; LEU-77; TYR-87; LEU-92; HIS-109; ALA-138; PRO-162; 218-TYR--LEU-1038 DEL; GLY-248; ASN-264; 298-TRP--LEU-1038 DEL; MET-341 AND ARG-467</scope>
    <scope>CHARACTERIZATION OF VARIANT ASN-775</scope>
</reference>
<sequence length="1038" mass="115201">MTSSLQRPWRVPWLPWTILLVSTAAASQNQERLCAFKDPYQQDLGIGESRISHENGTILCSKGSTCYGLWEKSKGDINLVKQGCWSHIGDPQECHYEECVVTTTPPSIQNGTYRFCCCSTDLCNVNFTENFPPPDTTPLSPPHSFNRDETIIIALASVSVLAVLIVALCFGYRMLTGDRKQGLHSMNMMEAAASEPSLDLDNLKLLELIGRGRYGAVYKGSLDERPVAVKVFSFANRQNFINEKNIYRVPLMEHDNIARFIVGDERVTADGRMEYLLVMEYYPNGSLCKYLSLHTSDWVSSCRLAHSVTRGLAYLHTELPRGDHYKPAISHRDLNSRNVLVKNDGTCVISDFGLSMRLTGNRLVRPGEEDNAAISEVGTIRYMAPEVLEGAVNLRDCESALKQVDMYALGLIYWEIFMRCTDLFPGESVPEYQMAFQTEVGNHPTFEDMQVLVSREKQRPKFPEAWKENSLAVRSLKETIEDCWDQDAEARLTAQCAEERMAELMMIWERNKSVSPTVNPMSTAMQNERNLSHNRRVPKIGPYPDYSSSSYIEDSIHHTDSIVKNISSEHSMSSTPLTIGEKNRNSINYERQQAQARIPSPETSVTSLSTNTTTTNTTGLTPSTGMTTISEMPYPDETNLHTTNVAQSIGPTPVCLQLTEEDLETNKLDPKEVDKNLKESSDENLMEHSLKQFSGPDPLSSTSSSLLYPLIKLAVEATGQQDFTQTANGQACLIPDVLPTQIYPLPKQQNLPKRPTSLPLNTKNSTKEPRLKFGSKHKSNLKQVETGVAKMNTINAAEPHVVTVTMNGVAGRNHSVNSHAATTQYANGTVLSGQTTNIVTHRAQEMLQNQFIGEDTRLNINSSPDEHEPLLRREQQAGHDEGVLDRLVDRRERPLEGGRTNSNNNNSNPCSEQDVLAQGVPSTAADPGPSKPRRAQRPNSLDLSATNVLDGSSIQIGESTQDGKSGSGEKIKKRVKTPYSLKRWRPSTWVISTESLDCEVNNNGSNRAVHSKSSTAVYLAEGGTATTMVSKDIGMNCL</sequence>
<feature type="signal peptide" evidence="3">
    <location>
        <begin position="1"/>
        <end position="26"/>
    </location>
</feature>
<feature type="chain" id="PRO_0000024415" description="Bone morphogenetic protein receptor type-2">
    <location>
        <begin position="27"/>
        <end position="1038"/>
    </location>
</feature>
<feature type="topological domain" description="Extracellular" evidence="3">
    <location>
        <begin position="27"/>
        <end position="150"/>
    </location>
</feature>
<feature type="transmembrane region" description="Helical" evidence="3">
    <location>
        <begin position="151"/>
        <end position="171"/>
    </location>
</feature>
<feature type="topological domain" description="Cytoplasmic" evidence="3">
    <location>
        <begin position="172"/>
        <end position="1038"/>
    </location>
</feature>
<feature type="domain" description="Protein kinase" evidence="4">
    <location>
        <begin position="203"/>
        <end position="504"/>
    </location>
</feature>
<feature type="region of interest" description="Disordered" evidence="5">
    <location>
        <begin position="593"/>
        <end position="626"/>
    </location>
</feature>
<feature type="region of interest" description="Disordered" evidence="5">
    <location>
        <begin position="746"/>
        <end position="770"/>
    </location>
</feature>
<feature type="region of interest" description="Disordered" evidence="5">
    <location>
        <begin position="872"/>
        <end position="972"/>
    </location>
</feature>
<feature type="compositionally biased region" description="Low complexity" evidence="5">
    <location>
        <begin position="603"/>
        <end position="626"/>
    </location>
</feature>
<feature type="compositionally biased region" description="Basic and acidic residues" evidence="5">
    <location>
        <begin position="872"/>
        <end position="896"/>
    </location>
</feature>
<feature type="compositionally biased region" description="Polar residues" evidence="5">
    <location>
        <begin position="937"/>
        <end position="964"/>
    </location>
</feature>
<feature type="active site" description="Proton acceptor" evidence="4">
    <location>
        <position position="333"/>
    </location>
</feature>
<feature type="binding site" evidence="28">
    <location>
        <begin position="209"/>
        <end position="217"/>
    </location>
    <ligand>
        <name>ATP</name>
        <dbReference type="ChEBI" id="CHEBI:30616"/>
    </ligand>
</feature>
<feature type="binding site" evidence="28">
    <location>
        <position position="230"/>
    </location>
    <ligand>
        <name>ATP</name>
        <dbReference type="ChEBI" id="CHEBI:30616"/>
    </ligand>
</feature>
<feature type="binding site" evidence="28">
    <location>
        <begin position="280"/>
        <end position="282"/>
    </location>
    <ligand>
        <name>ATP</name>
        <dbReference type="ChEBI" id="CHEBI:30616"/>
    </ligand>
</feature>
<feature type="binding site" evidence="28">
    <location>
        <begin position="337"/>
        <end position="338"/>
    </location>
    <ligand>
        <name>ATP</name>
        <dbReference type="ChEBI" id="CHEBI:30616"/>
    </ligand>
</feature>
<feature type="binding site" evidence="28">
    <location>
        <position position="351"/>
    </location>
    <ligand>
        <name>ATP</name>
        <dbReference type="ChEBI" id="CHEBI:30616"/>
    </ligand>
</feature>
<feature type="modified residue" description="Phosphothreonine" evidence="31">
    <location>
        <position position="379"/>
    </location>
</feature>
<feature type="modified residue" description="Phosphoserine" evidence="30">
    <location>
        <position position="586"/>
    </location>
</feature>
<feature type="modified residue" description="Phosphoserine" evidence="2">
    <location>
        <position position="680"/>
    </location>
</feature>
<feature type="modified residue" description="Phosphoserine" evidence="2">
    <location>
        <position position="681"/>
    </location>
</feature>
<feature type="glycosylation site" description="N-linked (GlcNAc...) asparagine" evidence="3">
    <location>
        <position position="55"/>
    </location>
</feature>
<feature type="glycosylation site" description="N-linked (GlcNAc...) asparagine" evidence="3">
    <location>
        <position position="110"/>
    </location>
</feature>
<feature type="glycosylation site" description="N-linked (GlcNAc...) asparagine" evidence="3">
    <location>
        <position position="126"/>
    </location>
</feature>
<feature type="disulfide bond" evidence="15 29">
    <location>
        <begin position="34"/>
        <end position="66"/>
    </location>
</feature>
<feature type="disulfide bond" evidence="15 29">
    <location>
        <begin position="60"/>
        <end position="84"/>
    </location>
</feature>
<feature type="disulfide bond" evidence="15 29">
    <location>
        <begin position="94"/>
        <end position="117"/>
    </location>
</feature>
<feature type="disulfide bond" evidence="15 29">
    <location>
        <begin position="99"/>
        <end position="116"/>
    </location>
</feature>
<feature type="disulfide bond" evidence="15 29">
    <location>
        <begin position="118"/>
        <end position="123"/>
    </location>
</feature>
<feature type="splice variant" id="VSP_054441" description="In isoform 2." evidence="25 26">
    <original>N</original>
    <variation>R</variation>
    <location>
        <position position="530"/>
    </location>
</feature>
<feature type="splice variant" id="VSP_054442" description="In isoform 2." evidence="25 26">
    <location>
        <begin position="531"/>
        <end position="1038"/>
    </location>
</feature>
<feature type="sequence variant" id="VAR_013670" description="In PPH1; loss of function in BMP signaling pathway via SMAD proteins activation; does not localize to the cell surface; when transfected in epithelial cells it results in constitutive p38MAPK phosphorylation consistent with a gain of function in the activation of p38MAPK cascade; dbSNP:rs1085307172." evidence="8 10">
    <original>C</original>
    <variation>Y</variation>
    <location>
        <position position="60"/>
    </location>
</feature>
<feature type="sequence variant" id="VAR_079588" description="In PPH1; uncertain significance; unchanged subcellular localization." evidence="22">
    <original>S</original>
    <variation>R</variation>
    <location>
        <position position="64"/>
    </location>
</feature>
<feature type="sequence variant" id="VAR_073041" description="In PPH1; significant decrease in nitric oxide synthesis by endothelial cells; dbSNP:rs1085307177." evidence="21">
    <original>Y</original>
    <variation>C</variation>
    <location>
        <position position="67"/>
    </location>
</feature>
<feature type="sequence variant" id="VAR_079589" description="In PPH1; uncertain significance; unchanged subcellular localization." evidence="20 22">
    <original>I</original>
    <variation>L</variation>
    <location>
        <position position="77"/>
    </location>
</feature>
<feature type="sequence variant" id="VAR_033109" description="In PPH1; dbSNP:rs1085307185." evidence="11">
    <original>Q</original>
    <variation>H</variation>
    <location>
        <position position="82"/>
    </location>
</feature>
<feature type="sequence variant" id="VAR_079590" description="In PPH1; alters alternative splicing of BMPR2; dbSNP:rs1085307197." evidence="20 22">
    <original>C</original>
    <variation>F</variation>
    <location>
        <position position="84"/>
    </location>
</feature>
<feature type="sequence variant" id="VAR_079591" description="In PPH1; uncertain significance; unchanged subcellular localization." evidence="20 22">
    <original>H</original>
    <variation>Y</variation>
    <location>
        <position position="87"/>
    </location>
</feature>
<feature type="sequence variant" id="VAR_079592" description="In PPH1; uncertain significance; unchanged subcellular localization." evidence="20 22">
    <original>Q</original>
    <variation>L</variation>
    <location>
        <position position="92"/>
    </location>
</feature>
<feature type="sequence variant" id="VAR_079593" description="In PPH1; uncertain significance; unchanged subcellular localization." evidence="22">
    <original>Q</original>
    <variation>H</variation>
    <location>
        <position position="109"/>
    </location>
</feature>
<feature type="sequence variant" id="VAR_013671" description="In PPH1; loss of function in BMP signaling pathway; does not localize to the cell surface; dbSNP:rs1085307215." evidence="8 10">
    <original>C</original>
    <variation>Y</variation>
    <location>
        <position position="117"/>
    </location>
</feature>
<feature type="sequence variant" id="VAR_013672" description="In PPH1; likely pathogenic; loss of function in BMP signaling pathway; does not localize to the cell surface; dbSNP:rs137852743." evidence="7 10">
    <original>C</original>
    <variation>W</variation>
    <location>
        <position position="118"/>
    </location>
</feature>
<feature type="sequence variant" id="VAR_013673" description="In PPH1; loss of function in BMP signaling pathway; does not localize to the cell surface; dbSNP:rs137852750." evidence="9 10">
    <original>C</original>
    <variation>R</variation>
    <location>
        <position position="123"/>
    </location>
</feature>
<feature type="sequence variant" id="VAR_013674" description="In PPH1; loss of function in BMP signaling pathway; does not localize to the cell surface; dbSNP:rs137852750." evidence="9 10">
    <original>C</original>
    <variation>S</variation>
    <location>
        <position position="123"/>
    </location>
</feature>
<feature type="sequence variant" id="VAR_079594" description="In PPH1; uncertain significance; unchanged subcellular localization." evidence="22">
    <original>P</original>
    <variation>A</variation>
    <location>
        <position position="138"/>
    </location>
</feature>
<feature type="sequence variant" id="VAR_079595" description="In PPH1; uncertain significance; unchanged subcellular localization." evidence="20 22">
    <original>A</original>
    <variation>P</variation>
    <location>
        <position position="162"/>
    </location>
</feature>
<feature type="sequence variant" id="VAR_033110" description="In PPH1; likely benign; dbSNP:rs137852754." evidence="11">
    <original>G</original>
    <variation>D</variation>
    <location>
        <position position="182"/>
    </location>
</feature>
<feature type="sequence variant" id="VAR_079596" description="In PPH1; changed localization to the plasma membrane." evidence="22">
    <location>
        <begin position="218"/>
        <end position="1038"/>
    </location>
</feature>
<feature type="sequence variant" id="VAR_013675" description="In dbSNP:rs754343081." evidence="9">
    <original>E</original>
    <variation>D</variation>
    <location>
        <position position="224"/>
    </location>
</feature>
<feature type="sequence variant" id="VAR_079597" description="In PPH1; uncertain significance; unchanged subcellular localization." evidence="22">
    <original>R</original>
    <variation>G</variation>
    <location>
        <position position="248"/>
    </location>
</feature>
<feature type="sequence variant" id="VAR_079598" description="In PPH1; uncertain significance; unchanged subcellular localization." evidence="20 22">
    <original>D</original>
    <variation>N</variation>
    <location>
        <position position="264"/>
    </location>
</feature>
<feature type="sequence variant" id="VAR_079599" description="In PPH1; loss of localization to the plasma membrane; localized to the cytoplasm." evidence="22">
    <location>
        <begin position="298"/>
        <end position="1038"/>
    </location>
</feature>
<feature type="sequence variant" id="VAR_079600" description="In PPH1; uncertain significance; unchanged subcellular localization; dbSNP:rs767882551." evidence="20 22">
    <original>V</original>
    <variation>M</variation>
    <location>
        <position position="341"/>
    </location>
</feature>
<feature type="sequence variant" id="VAR_013676" description="In PPH1; likely pathogenic; does not localize to the cell surface; dbSNP:rs137852744." evidence="7 10">
    <original>C</original>
    <variation>Y</variation>
    <location>
        <position position="347"/>
    </location>
</feature>
<feature type="sequence variant" id="VAR_013677" description="In PPH1; loss of function in BMP signaling pathway; does not localize to the cell surface; dbSNP:rs1085307324." evidence="9 10">
    <original>C</original>
    <variation>R</variation>
    <location>
        <position position="420"/>
    </location>
</feature>
<feature type="sequence variant" id="VAR_079601" description="In PPH1; uncertain significance; unchanged subcellular localization." evidence="22">
    <original>K</original>
    <variation>R</variation>
    <location>
        <position position="467"/>
    </location>
</feature>
<feature type="sequence variant" id="VAR_013678" description="In PPH1; sporadic; loss of function in BMP signaling pathway via SMAD proteins activation; does not localize to the cell surface; when transfected in epithelial cells it results in constitutive p38MAPK phosphorylation consistent with a gain of function in the activation of p38MAPK cascade; dbSNP:rs1085307354." evidence="8 10 11">
    <original>C</original>
    <variation>R</variation>
    <location>
        <position position="483"/>
    </location>
</feature>
<feature type="sequence variant" id="VAR_013679" description="In PPH1; complete loss of function; no effect on localization to the cell surface; no effect on BMP4 binding; dbSNP:rs137852745." evidence="7 9 10">
    <original>D</original>
    <variation>G</variation>
    <location>
        <position position="485"/>
    </location>
</feature>
<feature type="sequence variant" id="VAR_013680" description="In PPH1; pathogenic; no effect on localization to the cell surface; dbSNP:rs137852749." evidence="6 10">
    <original>R</original>
    <variation>Q</variation>
    <location>
        <position position="491"/>
    </location>
</feature>
<feature type="sequence variant" id="VAR_013681" description="In PPH1; loss of function in BMP signaling pathway via SMAD proteins activation; no effect on localization to the cell surface; no effect on BMP4 binding; when transfected in epithelial cells it results in constitutive p38MAPK phosphorylation consistent with a gain of function in the activation of p38MAPK cascade; dbSNP:rs137852746." evidence="6 10">
    <original>R</original>
    <variation>W</variation>
    <location>
        <position position="491"/>
    </location>
</feature>
<feature type="sequence variant" id="VAR_013682" description="In PPH1; no effect on localization to the cell surface; no effect on BMP4 binding; when transfected in epithelial cells it results in constitutive p38MAPK phosphorylation consistent with a gain of function in the activation of p38MAPK cascade; dbSNP:rs1085307364." evidence="9 10">
    <original>K</original>
    <variation>T</variation>
    <location>
        <position position="512"/>
    </location>
</feature>
<feature type="sequence variant" id="VAR_013683" description="In PPH1; no effect on localization to the cell surface; dbSNP:rs1085307365." evidence="10">
    <original>N</original>
    <variation>K</variation>
    <location>
        <position position="519"/>
    </location>
</feature>
<feature type="sequence variant" id="VAR_019996" description="Unchanged subcellular localization; dbSNP:rs2228545." evidence="16 20 22">
    <original>S</original>
    <variation>N</variation>
    <location>
        <position position="775"/>
    </location>
</feature>
<feature type="sequence variant" id="VAR_073042" description="In PPH1; abnormal subcellular localization; significant increase in apoptosis of endothelial cells; significant decrease in proliferation of endothelial cells; significant decrease in nitric oxide synthesis by endothelial cells; significant increase in endothelin 1 synthesis by endothelial cells; dbSNP:rs1006246556." evidence="21">
    <original>S</original>
    <variation>N</variation>
    <location>
        <position position="863"/>
    </location>
</feature>
<feature type="sequence variant" id="VAR_033111" description="In PPH1; leads to constitutive activation of the MAPK14 pathway; dbSNP:rs137852752." evidence="13">
    <original>R</original>
    <variation>P</variation>
    <location>
        <position position="899"/>
    </location>
</feature>
<feature type="sequence conflict" description="In Ref. 2; CAA88759." evidence="27" ref="2">
    <original>G</original>
    <variation>R</variation>
    <location>
        <position position="828"/>
    </location>
</feature>
<feature type="turn" evidence="34">
    <location>
        <begin position="27"/>
        <end position="30"/>
    </location>
</feature>
<feature type="strand" evidence="32">
    <location>
        <begin position="33"/>
        <end position="35"/>
    </location>
</feature>
<feature type="turn" evidence="32">
    <location>
        <begin position="42"/>
        <end position="47"/>
    </location>
</feature>
<feature type="helix" evidence="32">
    <location>
        <begin position="48"/>
        <end position="50"/>
    </location>
</feature>
<feature type="turn" evidence="32">
    <location>
        <begin position="53"/>
        <end position="56"/>
    </location>
</feature>
<feature type="strand" evidence="32">
    <location>
        <begin position="57"/>
        <end position="59"/>
    </location>
</feature>
<feature type="strand" evidence="32">
    <location>
        <begin position="66"/>
        <end position="73"/>
    </location>
</feature>
<feature type="strand" evidence="32">
    <location>
        <begin position="76"/>
        <end position="84"/>
    </location>
</feature>
<feature type="strand" evidence="32">
    <location>
        <begin position="90"/>
        <end position="92"/>
    </location>
</feature>
<feature type="turn" evidence="32">
    <location>
        <begin position="105"/>
        <end position="109"/>
    </location>
</feature>
<feature type="strand" evidence="32">
    <location>
        <begin position="113"/>
        <end position="118"/>
    </location>
</feature>
<feature type="helix" evidence="32">
    <location>
        <begin position="123"/>
        <end position="125"/>
    </location>
</feature>
<feature type="helix" evidence="33">
    <location>
        <begin position="200"/>
        <end position="202"/>
    </location>
</feature>
<feature type="strand" evidence="33">
    <location>
        <begin position="203"/>
        <end position="211"/>
    </location>
</feature>
<feature type="strand" evidence="33">
    <location>
        <begin position="216"/>
        <end position="222"/>
    </location>
</feature>
<feature type="strand" evidence="33">
    <location>
        <begin position="225"/>
        <end position="233"/>
    </location>
</feature>
<feature type="helix" evidence="33">
    <location>
        <begin position="234"/>
        <end position="236"/>
    </location>
</feature>
<feature type="helix" evidence="33">
    <location>
        <begin position="237"/>
        <end position="247"/>
    </location>
</feature>
<feature type="strand" evidence="33">
    <location>
        <begin position="260"/>
        <end position="267"/>
    </location>
</feature>
<feature type="strand" evidence="33">
    <location>
        <begin position="273"/>
        <end position="279"/>
    </location>
</feature>
<feature type="helix" evidence="33">
    <location>
        <begin position="287"/>
        <end position="293"/>
    </location>
</feature>
<feature type="helix" evidence="33">
    <location>
        <begin position="298"/>
        <end position="315"/>
    </location>
</feature>
<feature type="helix" evidence="33">
    <location>
        <begin position="322"/>
        <end position="324"/>
    </location>
</feature>
<feature type="strand" evidence="33">
    <location>
        <begin position="338"/>
        <end position="341"/>
    </location>
</feature>
<feature type="strand" evidence="33">
    <location>
        <begin position="347"/>
        <end position="349"/>
    </location>
</feature>
<feature type="strand" evidence="33">
    <location>
        <begin position="359"/>
        <end position="362"/>
    </location>
</feature>
<feature type="helix" evidence="33">
    <location>
        <begin position="380"/>
        <end position="382"/>
    </location>
</feature>
<feature type="helix" evidence="33">
    <location>
        <begin position="385"/>
        <end position="388"/>
    </location>
</feature>
<feature type="helix" evidence="33">
    <location>
        <begin position="394"/>
        <end position="396"/>
    </location>
</feature>
<feature type="helix" evidence="33">
    <location>
        <begin position="397"/>
        <end position="417"/>
    </location>
</feature>
<feature type="helix" evidence="33">
    <location>
        <begin position="421"/>
        <end position="423"/>
    </location>
</feature>
<feature type="helix" evidence="33">
    <location>
        <begin position="437"/>
        <end position="440"/>
    </location>
</feature>
<feature type="helix" evidence="33">
    <location>
        <begin position="446"/>
        <end position="453"/>
    </location>
</feature>
<feature type="helix" evidence="33">
    <location>
        <begin position="471"/>
        <end position="481"/>
    </location>
</feature>
<feature type="helix" evidence="33">
    <location>
        <begin position="488"/>
        <end position="490"/>
    </location>
</feature>
<feature type="helix" evidence="33">
    <location>
        <begin position="494"/>
        <end position="506"/>
    </location>
</feature>
<name>BMPR2_HUMAN</name>
<accession>Q13873</accession>
<accession>Q13161</accession>
<accession>Q16569</accession>
<accession>Q4ZG08</accession>
<accession>Q53SA5</accession>
<accession>Q585T8</accession>
<comment type="function">
    <text evidence="2 10 19">On ligand binding, forms a receptor complex consisting of two type II and two type I transmembrane serine/threonine kinases. Type II receptors phosphorylate and activate type I receptors which autophosphorylate, then bind and activate SMAD transcriptional regulators. Can also mediate signaling through the activation of the p38MAPK cascade (PubMed:12045205). Binds to BMP7, BMP2 and, less efficiently, BMP4. Binding is weak but enhanced by the presence of type I receptors for BMPs. Mediates induction of adipogenesis by GDF6. Promotes signaling also by binding to activin A/INHBA (PubMed:24018044).</text>
</comment>
<comment type="catalytic activity">
    <reaction>
        <text>L-threonyl-[receptor-protein] + ATP = O-phospho-L-threonyl-[receptor-protein] + ADP + H(+)</text>
        <dbReference type="Rhea" id="RHEA:44880"/>
        <dbReference type="Rhea" id="RHEA-COMP:11024"/>
        <dbReference type="Rhea" id="RHEA-COMP:11025"/>
        <dbReference type="ChEBI" id="CHEBI:15378"/>
        <dbReference type="ChEBI" id="CHEBI:30013"/>
        <dbReference type="ChEBI" id="CHEBI:30616"/>
        <dbReference type="ChEBI" id="CHEBI:61977"/>
        <dbReference type="ChEBI" id="CHEBI:456216"/>
        <dbReference type="EC" id="2.7.11.30"/>
    </reaction>
</comment>
<comment type="catalytic activity">
    <reaction>
        <text>L-seryl-[receptor-protein] + ATP = O-phospho-L-seryl-[receptor-protein] + ADP + H(+)</text>
        <dbReference type="Rhea" id="RHEA:18673"/>
        <dbReference type="Rhea" id="RHEA-COMP:11022"/>
        <dbReference type="Rhea" id="RHEA-COMP:11023"/>
        <dbReference type="ChEBI" id="CHEBI:15378"/>
        <dbReference type="ChEBI" id="CHEBI:29999"/>
        <dbReference type="ChEBI" id="CHEBI:30616"/>
        <dbReference type="ChEBI" id="CHEBI:83421"/>
        <dbReference type="ChEBI" id="CHEBI:456216"/>
        <dbReference type="EC" id="2.7.11.30"/>
    </reaction>
</comment>
<comment type="cofactor">
    <cofactor evidence="1">
        <name>Mg(2+)</name>
        <dbReference type="ChEBI" id="CHEBI:18420"/>
    </cofactor>
    <cofactor evidence="1">
        <name>Mn(2+)</name>
        <dbReference type="ChEBI" id="CHEBI:29035"/>
    </cofactor>
</comment>
<comment type="subunit">
    <text evidence="17 18 19 23 24">Interacts with GDF5 (PubMed:21976273). Interacts with BMP4 (PubMed:29212066). Interacts with SCUBE3 (PubMed:33308444). Interacts with TSC22D1/TSC-22 (PubMed:21791611). Interacts with activin A/INHBA (PubMed:24018044).</text>
</comment>
<comment type="interaction">
    <interactant intactId="EBI-527196">
        <id>Q13873</id>
    </interactant>
    <interactant intactId="EBI-8571476">
        <id>P43026</id>
        <label>GDF5</label>
    </interactant>
    <organismsDiffer>false</organismsDiffer>
    <experiments>4</experiments>
</comment>
<comment type="interaction">
    <interactant intactId="EBI-527196">
        <id>Q13873</id>
    </interactant>
    <interactant intactId="EBI-3952014">
        <id>Q13976</id>
        <label>PRKG1</label>
    </interactant>
    <organismsDiffer>false</organismsDiffer>
    <experiments>2</experiments>
</comment>
<comment type="interaction">
    <interactant intactId="EBI-527196">
        <id>Q13873</id>
    </interactant>
    <interactant intactId="EBI-356498">
        <id>P62258</id>
        <label>YWHAE</label>
    </interactant>
    <organismsDiffer>false</organismsDiffer>
    <experiments>2</experiments>
</comment>
<comment type="interaction">
    <interactant intactId="EBI-527196">
        <id>Q13873</id>
    </interactant>
    <interactant intactId="EBI-527325">
        <id>P08607</id>
        <label>C4bpa</label>
    </interactant>
    <organismsDiffer>true</organismsDiffer>
    <experiments>3</experiments>
</comment>
<comment type="interaction">
    <interactant intactId="EBI-527196">
        <id>Q13873</id>
    </interactant>
    <interactant intactId="EBI-397048">
        <id>P68404</id>
        <label>Prkcb</label>
    </interactant>
    <organismsDiffer>true</organismsDiffer>
    <experiments>4</experiments>
</comment>
<comment type="subcellular location">
    <subcellularLocation>
        <location evidence="21">Cell membrane</location>
        <topology>Single-pass type I membrane protein</topology>
    </subcellularLocation>
</comment>
<comment type="alternative products">
    <event type="alternative splicing"/>
    <isoform>
        <id>Q13873-1</id>
        <name>1</name>
        <sequence type="displayed"/>
    </isoform>
    <isoform>
        <id>Q13873-2</id>
        <name>2</name>
        <sequence type="described" ref="VSP_054441 VSP_054442"/>
    </isoform>
</comment>
<comment type="tissue specificity">
    <text>Highly expressed in heart and liver.</text>
</comment>
<comment type="disease" evidence="6 7 8 9 10 11 13 20 21 22">
    <disease id="DI-00942">
        <name>Pulmonary hypertension, primary, 1</name>
        <acronym>PPH1</acronym>
        <description>A rare disorder characterized by plexiform lesions of proliferating endothelial cells in pulmonary arterioles. The lesions lead to elevated pulmonary arterial pression, right ventricular failure, and death. The disease can occur from infancy throughout life and it has a mean age at onset of 36 years. Penetrance is reduced. Although familial pulmonary hypertension is rare, cases secondary to known etiologies are more common and include those associated with the appetite-suppressant drugs.</description>
        <dbReference type="MIM" id="178600"/>
    </disease>
    <text>The disease is caused by variants affecting the gene represented in this entry.</text>
</comment>
<comment type="disease" evidence="12 14">
    <disease id="DI-02233">
        <name>Pulmonary venoocclusive disease 1, autosomal dominant</name>
        <acronym>PVOD1</acronym>
        <description>A disease characterized by widespread fibrous obstruction and intimal thickening of septal veins and preseptal venules, a low diffusing capacity for carbon monoxide, occult alveolar hemorrhage, and nodular ground-glass opacities, septal lines and lymph node enlargement showed by high-resolution computed tomography of the chest. It is frequently associated with pulmonary capillary dilatation and proliferation, and is a rare and devastating cause of pulmonary hypertension.</description>
        <dbReference type="MIM" id="265450"/>
    </disease>
    <text>The disease is caused by variants affecting the gene represented in this entry.</text>
</comment>
<comment type="similarity">
    <text evidence="27">Belongs to the protein kinase superfamily. TKL Ser/Thr protein kinase family. TGFB receptor subfamily.</text>
</comment>
<keyword id="KW-0002">3D-structure</keyword>
<keyword id="KW-0025">Alternative splicing</keyword>
<keyword id="KW-0067">ATP-binding</keyword>
<keyword id="KW-1003">Cell membrane</keyword>
<keyword id="KW-0225">Disease variant</keyword>
<keyword id="KW-1015">Disulfide bond</keyword>
<keyword id="KW-0325">Glycoprotein</keyword>
<keyword id="KW-0418">Kinase</keyword>
<keyword id="KW-0460">Magnesium</keyword>
<keyword id="KW-0464">Manganese</keyword>
<keyword id="KW-0472">Membrane</keyword>
<keyword id="KW-0479">Metal-binding</keyword>
<keyword id="KW-0547">Nucleotide-binding</keyword>
<keyword id="KW-0597">Phosphoprotein</keyword>
<keyword id="KW-1267">Proteomics identification</keyword>
<keyword id="KW-0675">Receptor</keyword>
<keyword id="KW-1185">Reference proteome</keyword>
<keyword id="KW-0723">Serine/threonine-protein kinase</keyword>
<keyword id="KW-0732">Signal</keyword>
<keyword id="KW-0808">Transferase</keyword>
<keyword id="KW-0812">Transmembrane</keyword>
<keyword id="KW-1133">Transmembrane helix</keyword>
<evidence type="ECO:0000250" key="1"/>
<evidence type="ECO:0000250" key="2">
    <source>
        <dbReference type="UniProtKB" id="O35607"/>
    </source>
</evidence>
<evidence type="ECO:0000255" key="3"/>
<evidence type="ECO:0000255" key="4">
    <source>
        <dbReference type="PROSITE-ProRule" id="PRU00159"/>
    </source>
</evidence>
<evidence type="ECO:0000256" key="5">
    <source>
        <dbReference type="SAM" id="MobiDB-lite"/>
    </source>
</evidence>
<evidence type="ECO:0000269" key="6">
    <source>
    </source>
</evidence>
<evidence type="ECO:0000269" key="7">
    <source>
    </source>
</evidence>
<evidence type="ECO:0000269" key="8">
    <source>
    </source>
</evidence>
<evidence type="ECO:0000269" key="9">
    <source>
    </source>
</evidence>
<evidence type="ECO:0000269" key="10">
    <source>
    </source>
</evidence>
<evidence type="ECO:0000269" key="11">
    <source>
    </source>
</evidence>
<evidence type="ECO:0000269" key="12">
    <source>
    </source>
</evidence>
<evidence type="ECO:0000269" key="13">
    <source>
    </source>
</evidence>
<evidence type="ECO:0000269" key="14">
    <source>
    </source>
</evidence>
<evidence type="ECO:0000269" key="15">
    <source>
    </source>
</evidence>
<evidence type="ECO:0000269" key="16">
    <source>
    </source>
</evidence>
<evidence type="ECO:0000269" key="17">
    <source>
    </source>
</evidence>
<evidence type="ECO:0000269" key="18">
    <source>
    </source>
</evidence>
<evidence type="ECO:0000269" key="19">
    <source>
    </source>
</evidence>
<evidence type="ECO:0000269" key="20">
    <source>
    </source>
</evidence>
<evidence type="ECO:0000269" key="21">
    <source>
    </source>
</evidence>
<evidence type="ECO:0000269" key="22">
    <source>
    </source>
</evidence>
<evidence type="ECO:0000269" key="23">
    <source>
    </source>
</evidence>
<evidence type="ECO:0000269" key="24">
    <source>
    </source>
</evidence>
<evidence type="ECO:0000303" key="25">
    <source>
    </source>
</evidence>
<evidence type="ECO:0000303" key="26">
    <source>
    </source>
</evidence>
<evidence type="ECO:0000305" key="27"/>
<evidence type="ECO:0000305" key="28">
    <source ref="17"/>
</evidence>
<evidence type="ECO:0007744" key="29">
    <source>
        <dbReference type="PDB" id="2HLQ"/>
    </source>
</evidence>
<evidence type="ECO:0007744" key="30">
    <source>
    </source>
</evidence>
<evidence type="ECO:0007744" key="31">
    <source>
    </source>
</evidence>
<evidence type="ECO:0007829" key="32">
    <source>
        <dbReference type="PDB" id="2HLQ"/>
    </source>
</evidence>
<evidence type="ECO:0007829" key="33">
    <source>
        <dbReference type="PDB" id="6UNP"/>
    </source>
</evidence>
<evidence type="ECO:0007829" key="34">
    <source>
        <dbReference type="PDB" id="7PPA"/>
    </source>
</evidence>
<organism>
    <name type="scientific">Homo sapiens</name>
    <name type="common">Human</name>
    <dbReference type="NCBI Taxonomy" id="9606"/>
    <lineage>
        <taxon>Eukaryota</taxon>
        <taxon>Metazoa</taxon>
        <taxon>Chordata</taxon>
        <taxon>Craniata</taxon>
        <taxon>Vertebrata</taxon>
        <taxon>Euteleostomi</taxon>
        <taxon>Mammalia</taxon>
        <taxon>Eutheria</taxon>
        <taxon>Euarchontoglires</taxon>
        <taxon>Primates</taxon>
        <taxon>Haplorrhini</taxon>
        <taxon>Catarrhini</taxon>
        <taxon>Hominidae</taxon>
        <taxon>Homo</taxon>
    </lineage>
</organism>
<protein>
    <recommendedName>
        <fullName>Bone morphogenetic protein receptor type-2</fullName>
        <shortName>BMP type-2 receptor</shortName>
        <shortName>BMPR-2</shortName>
        <ecNumber>2.7.11.30</ecNumber>
    </recommendedName>
    <alternativeName>
        <fullName>Bone morphogenetic protein receptor type II</fullName>
        <shortName>BMP type II receptor</shortName>
        <shortName>BMPR-II</shortName>
    </alternativeName>
</protein>
<dbReference type="EC" id="2.7.11.30"/>
<dbReference type="EMBL" id="U25110">
    <property type="protein sequence ID" value="AAA86519.1"/>
    <property type="molecule type" value="mRNA"/>
</dbReference>
<dbReference type="EMBL" id="Z48923">
    <property type="protein sequence ID" value="CAA88759.1"/>
    <property type="molecule type" value="mRNA"/>
</dbReference>
<dbReference type="EMBL" id="D50516">
    <property type="protein sequence ID" value="BAA09094.1"/>
    <property type="molecule type" value="mRNA"/>
</dbReference>
<dbReference type="EMBL" id="U20165">
    <property type="protein sequence ID" value="AAC50105.1"/>
    <property type="molecule type" value="mRNA"/>
</dbReference>
<dbReference type="EMBL" id="AC009960">
    <property type="protein sequence ID" value="AAX76517.1"/>
    <property type="molecule type" value="Genomic_DNA"/>
</dbReference>
<dbReference type="EMBL" id="AC073410">
    <property type="protein sequence ID" value="AAX88941.1"/>
    <property type="molecule type" value="Genomic_DNA"/>
</dbReference>
<dbReference type="EMBL" id="AC064836">
    <property type="protein sequence ID" value="AAY24146.1"/>
    <property type="molecule type" value="Genomic_DNA"/>
</dbReference>
<dbReference type="EMBL" id="CH471063">
    <property type="protein sequence ID" value="EAW70309.1"/>
    <property type="molecule type" value="Genomic_DNA"/>
</dbReference>
<dbReference type="EMBL" id="BC052985">
    <property type="protein sequence ID" value="AAH52985.1"/>
    <property type="molecule type" value="mRNA"/>
</dbReference>
<dbReference type="CCDS" id="CCDS33361.1">
    <molecule id="Q13873-1"/>
</dbReference>
<dbReference type="PIR" id="I38935">
    <property type="entry name" value="I38935"/>
</dbReference>
<dbReference type="RefSeq" id="NP_001195.2">
    <molecule id="Q13873-1"/>
    <property type="nucleotide sequence ID" value="NM_001204.6"/>
</dbReference>
<dbReference type="PDB" id="2HLQ">
    <property type="method" value="X-ray"/>
    <property type="resolution" value="1.45 A"/>
    <property type="chains" value="A=33-131"/>
</dbReference>
<dbReference type="PDB" id="3G2F">
    <property type="method" value="X-ray"/>
    <property type="resolution" value="2.35 A"/>
    <property type="chains" value="A/B=189-517"/>
</dbReference>
<dbReference type="PDB" id="6UNP">
    <property type="method" value="X-ray"/>
    <property type="resolution" value="2.30 A"/>
    <property type="chains" value="A/B=188-529"/>
</dbReference>
<dbReference type="PDB" id="7PPA">
    <property type="method" value="X-ray"/>
    <property type="resolution" value="1.48 A"/>
    <property type="chains" value="C/D=27-150"/>
</dbReference>
<dbReference type="PDB" id="7PPB">
    <property type="method" value="X-ray"/>
    <property type="resolution" value="2.40 A"/>
    <property type="chains" value="B=27-150"/>
</dbReference>
<dbReference type="PDB" id="7PPC">
    <property type="method" value="X-ray"/>
    <property type="resolution" value="3.60 A"/>
    <property type="chains" value="I/J/K/L=27-150"/>
</dbReference>
<dbReference type="PDB" id="7U5O">
    <property type="method" value="X-ray"/>
    <property type="resolution" value="3.45 A"/>
    <property type="chains" value="E/F/G=27-137"/>
</dbReference>
<dbReference type="PDBsum" id="2HLQ"/>
<dbReference type="PDBsum" id="3G2F"/>
<dbReference type="PDBsum" id="6UNP"/>
<dbReference type="PDBsum" id="7PPA"/>
<dbReference type="PDBsum" id="7PPB"/>
<dbReference type="PDBsum" id="7PPC"/>
<dbReference type="PDBsum" id="7U5O"/>
<dbReference type="SMR" id="Q13873"/>
<dbReference type="BioGRID" id="107127">
    <property type="interactions" value="105"/>
</dbReference>
<dbReference type="CORUM" id="Q13873"/>
<dbReference type="DIP" id="DIP-5794N"/>
<dbReference type="ELM" id="Q13873"/>
<dbReference type="FunCoup" id="Q13873">
    <property type="interactions" value="1207"/>
</dbReference>
<dbReference type="IntAct" id="Q13873">
    <property type="interactions" value="62"/>
</dbReference>
<dbReference type="MINT" id="Q13873"/>
<dbReference type="STRING" id="9606.ENSP00000363708"/>
<dbReference type="BindingDB" id="Q13873"/>
<dbReference type="ChEMBL" id="CHEMBL5467"/>
<dbReference type="DrugBank" id="DB11639">
    <property type="generic name" value="Dibotermin alfa"/>
</dbReference>
<dbReference type="DrugBank" id="DB12010">
    <property type="generic name" value="Fostamatinib"/>
</dbReference>
<dbReference type="DrugCentral" id="Q13873"/>
<dbReference type="GuidetoPHARMACOLOGY" id="1794"/>
<dbReference type="GlyConnect" id="1046">
    <property type="glycosylation" value="2 N-Linked glycans (2 sites)"/>
</dbReference>
<dbReference type="GlyCosmos" id="Q13873">
    <property type="glycosylation" value="6 sites, 5 glycans"/>
</dbReference>
<dbReference type="GlyGen" id="Q13873">
    <property type="glycosylation" value="7 sites, 5 N-linked glycans (2 sites), 2 O-linked glycans (2 sites)"/>
</dbReference>
<dbReference type="iPTMnet" id="Q13873"/>
<dbReference type="PhosphoSitePlus" id="Q13873"/>
<dbReference type="SwissPalm" id="Q13873"/>
<dbReference type="BioMuta" id="BMPR2"/>
<dbReference type="DMDM" id="12643724"/>
<dbReference type="CPTAC" id="CPTAC-2209"/>
<dbReference type="jPOST" id="Q13873"/>
<dbReference type="MassIVE" id="Q13873"/>
<dbReference type="PaxDb" id="9606-ENSP00000363708"/>
<dbReference type="PeptideAtlas" id="Q13873"/>
<dbReference type="ProteomicsDB" id="59705">
    <molecule id="Q13873-1"/>
</dbReference>
<dbReference type="Pumba" id="Q13873"/>
<dbReference type="Antibodypedia" id="19946">
    <property type="antibodies" value="530 antibodies from 37 providers"/>
</dbReference>
<dbReference type="DNASU" id="659"/>
<dbReference type="Ensembl" id="ENST00000374574.2">
    <molecule id="Q13873-2"/>
    <property type="protein sequence ID" value="ENSP00000363702.2"/>
    <property type="gene ID" value="ENSG00000204217.16"/>
</dbReference>
<dbReference type="Ensembl" id="ENST00000374580.10">
    <molecule id="Q13873-1"/>
    <property type="protein sequence ID" value="ENSP00000363708.4"/>
    <property type="gene ID" value="ENSG00000204217.16"/>
</dbReference>
<dbReference type="GeneID" id="659"/>
<dbReference type="KEGG" id="hsa:659"/>
<dbReference type="MANE-Select" id="ENST00000374580.10">
    <property type="protein sequence ID" value="ENSP00000363708.4"/>
    <property type="RefSeq nucleotide sequence ID" value="NM_001204.7"/>
    <property type="RefSeq protein sequence ID" value="NP_001195.2"/>
</dbReference>
<dbReference type="UCSC" id="uc002uzf.5">
    <molecule id="Q13873-1"/>
    <property type="organism name" value="human"/>
</dbReference>
<dbReference type="AGR" id="HGNC:1078"/>
<dbReference type="CTD" id="659"/>
<dbReference type="DisGeNET" id="659"/>
<dbReference type="GeneCards" id="BMPR2"/>
<dbReference type="GeneReviews" id="BMPR2"/>
<dbReference type="HGNC" id="HGNC:1078">
    <property type="gene designation" value="BMPR2"/>
</dbReference>
<dbReference type="HPA" id="ENSG00000204217">
    <property type="expression patterns" value="Low tissue specificity"/>
</dbReference>
<dbReference type="MalaCards" id="BMPR2"/>
<dbReference type="MIM" id="178600">
    <property type="type" value="phenotype"/>
</dbReference>
<dbReference type="MIM" id="265450">
    <property type="type" value="phenotype"/>
</dbReference>
<dbReference type="MIM" id="600799">
    <property type="type" value="gene"/>
</dbReference>
<dbReference type="neXtProt" id="NX_Q13873"/>
<dbReference type="OpenTargets" id="ENSG00000204217"/>
<dbReference type="Orphanet" id="275786">
    <property type="disease" value="Drug- or toxin-induced pulmonary arterial hypertension"/>
</dbReference>
<dbReference type="Orphanet" id="275777">
    <property type="disease" value="Heritable pulmonary arterial hypertension"/>
</dbReference>
<dbReference type="Orphanet" id="31837">
    <property type="disease" value="Pulmonary venoocclusive disease"/>
</dbReference>
<dbReference type="PharmGKB" id="PA25388"/>
<dbReference type="VEuPathDB" id="HostDB:ENSG00000204217"/>
<dbReference type="eggNOG" id="KOG3653">
    <property type="taxonomic scope" value="Eukaryota"/>
</dbReference>
<dbReference type="GeneTree" id="ENSGT00940000156449"/>
<dbReference type="HOGENOM" id="CLU_013015_0_0_1"/>
<dbReference type="InParanoid" id="Q13873"/>
<dbReference type="OMA" id="NTVAHRG"/>
<dbReference type="OrthoDB" id="669224at2759"/>
<dbReference type="PAN-GO" id="Q13873">
    <property type="GO annotations" value="7 GO annotations based on evolutionary models"/>
</dbReference>
<dbReference type="PhylomeDB" id="Q13873"/>
<dbReference type="TreeFam" id="TF314724"/>
<dbReference type="PathwayCommons" id="Q13873"/>
<dbReference type="Reactome" id="R-HSA-201451">
    <property type="pathway name" value="Signaling by BMP"/>
</dbReference>
<dbReference type="SignaLink" id="Q13873"/>
<dbReference type="SIGNOR" id="Q13873"/>
<dbReference type="BioGRID-ORCS" id="659">
    <property type="hits" value="26 hits in 1201 CRISPR screens"/>
</dbReference>
<dbReference type="ChiTaRS" id="BMPR2">
    <property type="organism name" value="human"/>
</dbReference>
<dbReference type="EvolutionaryTrace" id="Q13873"/>
<dbReference type="GeneWiki" id="BMPR2"/>
<dbReference type="GenomeRNAi" id="659"/>
<dbReference type="Pharos" id="Q13873">
    <property type="development level" value="Tchem"/>
</dbReference>
<dbReference type="PRO" id="PR:Q13873"/>
<dbReference type="Proteomes" id="UP000005640">
    <property type="component" value="Chromosome 2"/>
</dbReference>
<dbReference type="RNAct" id="Q13873">
    <property type="molecule type" value="protein"/>
</dbReference>
<dbReference type="Bgee" id="ENSG00000204217">
    <property type="expression patterns" value="Expressed in visceral pleura and 197 other cell types or tissues"/>
</dbReference>
<dbReference type="ExpressionAtlas" id="Q13873">
    <property type="expression patterns" value="baseline and differential"/>
</dbReference>
<dbReference type="GO" id="GO:0005912">
    <property type="term" value="C:adherens junction"/>
    <property type="evidence" value="ECO:0000314"/>
    <property type="project" value="BHF-UCL"/>
</dbReference>
<dbReference type="GO" id="GO:0016324">
    <property type="term" value="C:apical plasma membrane"/>
    <property type="evidence" value="ECO:0007669"/>
    <property type="project" value="Ensembl"/>
</dbReference>
<dbReference type="GO" id="GO:0030424">
    <property type="term" value="C:axon"/>
    <property type="evidence" value="ECO:0007669"/>
    <property type="project" value="Ensembl"/>
</dbReference>
<dbReference type="GO" id="GO:0009925">
    <property type="term" value="C:basal plasma membrane"/>
    <property type="evidence" value="ECO:0007669"/>
    <property type="project" value="Ensembl"/>
</dbReference>
<dbReference type="GO" id="GO:0005901">
    <property type="term" value="C:caveola"/>
    <property type="evidence" value="ECO:0007669"/>
    <property type="project" value="Ensembl"/>
</dbReference>
<dbReference type="GO" id="GO:0009986">
    <property type="term" value="C:cell surface"/>
    <property type="evidence" value="ECO:0007669"/>
    <property type="project" value="Ensembl"/>
</dbReference>
<dbReference type="GO" id="GO:0005905">
    <property type="term" value="C:clathrin-coated pit"/>
    <property type="evidence" value="ECO:0007669"/>
    <property type="project" value="Ensembl"/>
</dbReference>
<dbReference type="GO" id="GO:0030425">
    <property type="term" value="C:dendrite"/>
    <property type="evidence" value="ECO:0007669"/>
    <property type="project" value="Ensembl"/>
</dbReference>
<dbReference type="GO" id="GO:0005615">
    <property type="term" value="C:extracellular space"/>
    <property type="evidence" value="ECO:0007005"/>
    <property type="project" value="UniProtKB"/>
</dbReference>
<dbReference type="GO" id="GO:0043025">
    <property type="term" value="C:neuronal cell body"/>
    <property type="evidence" value="ECO:0007669"/>
    <property type="project" value="Ensembl"/>
</dbReference>
<dbReference type="GO" id="GO:0005654">
    <property type="term" value="C:nucleoplasm"/>
    <property type="evidence" value="ECO:0000314"/>
    <property type="project" value="HPA"/>
</dbReference>
<dbReference type="GO" id="GO:0005886">
    <property type="term" value="C:plasma membrane"/>
    <property type="evidence" value="ECO:0000314"/>
    <property type="project" value="HPA"/>
</dbReference>
<dbReference type="GO" id="GO:0014069">
    <property type="term" value="C:postsynaptic density"/>
    <property type="evidence" value="ECO:0007669"/>
    <property type="project" value="Ensembl"/>
</dbReference>
<dbReference type="GO" id="GO:0043235">
    <property type="term" value="C:receptor complex"/>
    <property type="evidence" value="ECO:0000318"/>
    <property type="project" value="GO_Central"/>
</dbReference>
<dbReference type="GO" id="GO:0016362">
    <property type="term" value="F:activin receptor activity, type II"/>
    <property type="evidence" value="ECO:0000314"/>
    <property type="project" value="UniProt"/>
</dbReference>
<dbReference type="GO" id="GO:0005524">
    <property type="term" value="F:ATP binding"/>
    <property type="evidence" value="ECO:0007669"/>
    <property type="project" value="UniProtKB-KW"/>
</dbReference>
<dbReference type="GO" id="GO:0036122">
    <property type="term" value="F:BMP binding"/>
    <property type="evidence" value="ECO:0000353"/>
    <property type="project" value="UniProtKB"/>
</dbReference>
<dbReference type="GO" id="GO:0098821">
    <property type="term" value="F:BMP receptor activity"/>
    <property type="evidence" value="ECO:0000250"/>
    <property type="project" value="UniProtKB"/>
</dbReference>
<dbReference type="GO" id="GO:0045296">
    <property type="term" value="F:cadherin binding"/>
    <property type="evidence" value="ECO:0000353"/>
    <property type="project" value="ARUK-UCL"/>
</dbReference>
<dbReference type="GO" id="GO:0019838">
    <property type="term" value="F:growth factor binding"/>
    <property type="evidence" value="ECO:0007669"/>
    <property type="project" value="Ensembl"/>
</dbReference>
<dbReference type="GO" id="GO:0046872">
    <property type="term" value="F:metal ion binding"/>
    <property type="evidence" value="ECO:0007669"/>
    <property type="project" value="UniProtKB-KW"/>
</dbReference>
<dbReference type="GO" id="GO:1990782">
    <property type="term" value="F:protein tyrosine kinase binding"/>
    <property type="evidence" value="ECO:0000353"/>
    <property type="project" value="ARUK-UCL"/>
</dbReference>
<dbReference type="GO" id="GO:0005024">
    <property type="term" value="F:transforming growth factor beta receptor activity"/>
    <property type="evidence" value="ECO:0000318"/>
    <property type="project" value="GO_Central"/>
</dbReference>
<dbReference type="GO" id="GO:0009952">
    <property type="term" value="P:anterior/posterior pattern specification"/>
    <property type="evidence" value="ECO:0000250"/>
    <property type="project" value="BHF-UCL"/>
</dbReference>
<dbReference type="GO" id="GO:0003176">
    <property type="term" value="P:aortic valve development"/>
    <property type="evidence" value="ECO:0000250"/>
    <property type="project" value="BHF-UCL"/>
</dbReference>
<dbReference type="GO" id="GO:0060840">
    <property type="term" value="P:artery development"/>
    <property type="evidence" value="ECO:0000250"/>
    <property type="project" value="BHF-UCL"/>
</dbReference>
<dbReference type="GO" id="GO:0060413">
    <property type="term" value="P:atrial septum morphogenesis"/>
    <property type="evidence" value="ECO:0000250"/>
    <property type="project" value="BHF-UCL"/>
</dbReference>
<dbReference type="GO" id="GO:0001568">
    <property type="term" value="P:blood vessel development"/>
    <property type="evidence" value="ECO:0000318"/>
    <property type="project" value="GO_Central"/>
</dbReference>
<dbReference type="GO" id="GO:0001974">
    <property type="term" value="P:blood vessel remodeling"/>
    <property type="evidence" value="ECO:0000250"/>
    <property type="project" value="BHF-UCL"/>
</dbReference>
<dbReference type="GO" id="GO:0030509">
    <property type="term" value="P:BMP signaling pathway"/>
    <property type="evidence" value="ECO:0000314"/>
    <property type="project" value="BHF-UCL"/>
</dbReference>
<dbReference type="GO" id="GO:0030154">
    <property type="term" value="P:cell differentiation"/>
    <property type="evidence" value="ECO:0000314"/>
    <property type="project" value="UniProt"/>
</dbReference>
<dbReference type="GO" id="GO:0007178">
    <property type="term" value="P:cell surface receptor protein serine/threonine kinase signaling pathway"/>
    <property type="evidence" value="ECO:0000314"/>
    <property type="project" value="BHF-UCL"/>
</dbReference>
<dbReference type="GO" id="GO:0071773">
    <property type="term" value="P:cellular response to BMP stimulus"/>
    <property type="evidence" value="ECO:0000315"/>
    <property type="project" value="BHF-UCL"/>
</dbReference>
<dbReference type="GO" id="GO:0071363">
    <property type="term" value="P:cellular response to growth factor stimulus"/>
    <property type="evidence" value="ECO:0000318"/>
    <property type="project" value="GO_Central"/>
</dbReference>
<dbReference type="GO" id="GO:0009267">
    <property type="term" value="P:cellular response to starvation"/>
    <property type="evidence" value="ECO:0000270"/>
    <property type="project" value="BHF-UCL"/>
</dbReference>
<dbReference type="GO" id="GO:0002063">
    <property type="term" value="P:chondrocyte development"/>
    <property type="evidence" value="ECO:0000315"/>
    <property type="project" value="AgBase"/>
</dbReference>
<dbReference type="GO" id="GO:0003197">
    <property type="term" value="P:endocardial cushion development"/>
    <property type="evidence" value="ECO:0000250"/>
    <property type="project" value="BHF-UCL"/>
</dbReference>
<dbReference type="GO" id="GO:0060350">
    <property type="term" value="P:endochondral bone morphogenesis"/>
    <property type="evidence" value="ECO:0000250"/>
    <property type="project" value="AgBase"/>
</dbReference>
<dbReference type="GO" id="GO:0072577">
    <property type="term" value="P:endothelial cell apoptotic process"/>
    <property type="evidence" value="ECO:0000315"/>
    <property type="project" value="UniProtKB"/>
</dbReference>
<dbReference type="GO" id="GO:0001935">
    <property type="term" value="P:endothelial cell proliferation"/>
    <property type="evidence" value="ECO:0000315"/>
    <property type="project" value="UniProtKB"/>
</dbReference>
<dbReference type="GO" id="GO:0060173">
    <property type="term" value="P:limb development"/>
    <property type="evidence" value="ECO:0007669"/>
    <property type="project" value="Ensembl"/>
</dbReference>
<dbReference type="GO" id="GO:0048286">
    <property type="term" value="P:lung alveolus development"/>
    <property type="evidence" value="ECO:0000250"/>
    <property type="project" value="BHF-UCL"/>
</dbReference>
<dbReference type="GO" id="GO:0060426">
    <property type="term" value="P:lung vasculature development"/>
    <property type="evidence" value="ECO:0000315"/>
    <property type="project" value="UniProtKB"/>
</dbReference>
<dbReference type="GO" id="GO:0001946">
    <property type="term" value="P:lymphangiogenesis"/>
    <property type="evidence" value="ECO:0000250"/>
    <property type="project" value="BHF-UCL"/>
</dbReference>
<dbReference type="GO" id="GO:0060836">
    <property type="term" value="P:lymphatic endothelial cell differentiation"/>
    <property type="evidence" value="ECO:0000250"/>
    <property type="project" value="BHF-UCL"/>
</dbReference>
<dbReference type="GO" id="GO:0001893">
    <property type="term" value="P:maternal placenta development"/>
    <property type="evidence" value="ECO:0007669"/>
    <property type="project" value="Ensembl"/>
</dbReference>
<dbReference type="GO" id="GO:0001707">
    <property type="term" value="P:mesoderm formation"/>
    <property type="evidence" value="ECO:0000250"/>
    <property type="project" value="BHF-UCL"/>
</dbReference>
<dbReference type="GO" id="GO:0003183">
    <property type="term" value="P:mitral valve morphogenesis"/>
    <property type="evidence" value="ECO:0000250"/>
    <property type="project" value="BHF-UCL"/>
</dbReference>
<dbReference type="GO" id="GO:0030308">
    <property type="term" value="P:negative regulation of cell growth"/>
    <property type="evidence" value="ECO:0000314"/>
    <property type="project" value="UniProtKB"/>
</dbReference>
<dbReference type="GO" id="GO:0003252">
    <property type="term" value="P:negative regulation of cell proliferation involved in heart valve morphogenesis"/>
    <property type="evidence" value="ECO:0000250"/>
    <property type="project" value="BHF-UCL"/>
</dbReference>
<dbReference type="GO" id="GO:1902731">
    <property type="term" value="P:negative regulation of chondrocyte proliferation"/>
    <property type="evidence" value="ECO:0000315"/>
    <property type="project" value="AgBase"/>
</dbReference>
<dbReference type="GO" id="GO:0051148">
    <property type="term" value="P:negative regulation of muscle cell differentiation"/>
    <property type="evidence" value="ECO:0007669"/>
    <property type="project" value="Ensembl"/>
</dbReference>
<dbReference type="GO" id="GO:0048662">
    <property type="term" value="P:negative regulation of smooth muscle cell proliferation"/>
    <property type="evidence" value="ECO:0000315"/>
    <property type="project" value="BHF-UCL"/>
</dbReference>
<dbReference type="GO" id="GO:0003085">
    <property type="term" value="P:negative regulation of systemic arterial blood pressure"/>
    <property type="evidence" value="ECO:0000315"/>
    <property type="project" value="BHF-UCL"/>
</dbReference>
<dbReference type="GO" id="GO:0045906">
    <property type="term" value="P:negative regulation of vasoconstriction"/>
    <property type="evidence" value="ECO:0000250"/>
    <property type="project" value="BHF-UCL"/>
</dbReference>
<dbReference type="GO" id="GO:0001649">
    <property type="term" value="P:osteoblast differentiation"/>
    <property type="evidence" value="ECO:0000315"/>
    <property type="project" value="BHF-UCL"/>
</dbReference>
<dbReference type="GO" id="GO:0003151">
    <property type="term" value="P:outflow tract morphogenesis"/>
    <property type="evidence" value="ECO:0000250"/>
    <property type="project" value="BHF-UCL"/>
</dbReference>
<dbReference type="GO" id="GO:0048842">
    <property type="term" value="P:positive regulation of axon extension involved in axon guidance"/>
    <property type="evidence" value="ECO:0007669"/>
    <property type="project" value="Ensembl"/>
</dbReference>
<dbReference type="GO" id="GO:0030501">
    <property type="term" value="P:positive regulation of bone mineralization"/>
    <property type="evidence" value="ECO:0000315"/>
    <property type="project" value="BHF-UCL"/>
</dbReference>
<dbReference type="GO" id="GO:0061036">
    <property type="term" value="P:positive regulation of cartilage development"/>
    <property type="evidence" value="ECO:0000250"/>
    <property type="project" value="AgBase"/>
</dbReference>
<dbReference type="GO" id="GO:0010634">
    <property type="term" value="P:positive regulation of epithelial cell migration"/>
    <property type="evidence" value="ECO:0000314"/>
    <property type="project" value="UniProtKB"/>
</dbReference>
<dbReference type="GO" id="GO:0010628">
    <property type="term" value="P:positive regulation of gene expression"/>
    <property type="evidence" value="ECO:0000315"/>
    <property type="project" value="BHF-UCL"/>
</dbReference>
<dbReference type="GO" id="GO:0045778">
    <property type="term" value="P:positive regulation of ossification"/>
    <property type="evidence" value="ECO:0000250"/>
    <property type="project" value="BHF-UCL"/>
</dbReference>
<dbReference type="GO" id="GO:0045669">
    <property type="term" value="P:positive regulation of osteoblast differentiation"/>
    <property type="evidence" value="ECO:0000315"/>
    <property type="project" value="BHF-UCL"/>
</dbReference>
<dbReference type="GO" id="GO:0060391">
    <property type="term" value="P:positive regulation of SMAD protein signal transduction"/>
    <property type="evidence" value="ECO:0000315"/>
    <property type="project" value="UniProtKB"/>
</dbReference>
<dbReference type="GO" id="GO:0045944">
    <property type="term" value="P:positive regulation of transcription by RNA polymerase II"/>
    <property type="evidence" value="ECO:0000315"/>
    <property type="project" value="BHF-UCL"/>
</dbReference>
<dbReference type="GO" id="GO:0030166">
    <property type="term" value="P:proteoglycan biosynthetic process"/>
    <property type="evidence" value="ECO:0000250"/>
    <property type="project" value="AgBase"/>
</dbReference>
<dbReference type="GO" id="GO:0003177">
    <property type="term" value="P:pulmonary valve development"/>
    <property type="evidence" value="ECO:0000250"/>
    <property type="project" value="BHF-UCL"/>
</dbReference>
<dbReference type="GO" id="GO:0042127">
    <property type="term" value="P:regulation of cell population proliferation"/>
    <property type="evidence" value="ECO:0000315"/>
    <property type="project" value="HGNC-UCL"/>
</dbReference>
<dbReference type="GO" id="GO:0014916">
    <property type="term" value="P:regulation of lung blood pressure"/>
    <property type="evidence" value="ECO:0000315"/>
    <property type="project" value="BHF-UCL"/>
</dbReference>
<dbReference type="GO" id="GO:0061298">
    <property type="term" value="P:retina vasculature development in camera-type eye"/>
    <property type="evidence" value="ECO:0000250"/>
    <property type="project" value="BHF-UCL"/>
</dbReference>
<dbReference type="GO" id="GO:1905314">
    <property type="term" value="P:semi-lunar valve development"/>
    <property type="evidence" value="ECO:0000250"/>
    <property type="project" value="BHF-UCL"/>
</dbReference>
<dbReference type="GO" id="GO:0048863">
    <property type="term" value="P:stem cell differentiation"/>
    <property type="evidence" value="ECO:0000250"/>
    <property type="project" value="UniProt"/>
</dbReference>
<dbReference type="GO" id="GO:0003186">
    <property type="term" value="P:tricuspid valve morphogenesis"/>
    <property type="evidence" value="ECO:0000250"/>
    <property type="project" value="BHF-UCL"/>
</dbReference>
<dbReference type="GO" id="GO:0060841">
    <property type="term" value="P:venous blood vessel development"/>
    <property type="evidence" value="ECO:0000250"/>
    <property type="project" value="BHF-UCL"/>
</dbReference>
<dbReference type="GO" id="GO:0060412">
    <property type="term" value="P:ventricular septum morphogenesis"/>
    <property type="evidence" value="ECO:0000250"/>
    <property type="project" value="BHF-UCL"/>
</dbReference>
<dbReference type="CDD" id="cd14054">
    <property type="entry name" value="STKc_BMPR2_AMHR2"/>
    <property type="match status" value="1"/>
</dbReference>
<dbReference type="CDD" id="cd23614">
    <property type="entry name" value="TFP_LU_ECD_BMPR2"/>
    <property type="match status" value="1"/>
</dbReference>
<dbReference type="FunFam" id="1.10.510.10:FF:000180">
    <property type="entry name" value="Receptor protein serine/threonine kinase"/>
    <property type="match status" value="1"/>
</dbReference>
<dbReference type="FunFam" id="2.10.60.10:FF:000006">
    <property type="entry name" value="Receptor protein serine/threonine kinase"/>
    <property type="match status" value="1"/>
</dbReference>
<dbReference type="FunFam" id="3.30.200.20:FF:000174">
    <property type="entry name" value="Receptor protein serine/threonine kinase"/>
    <property type="match status" value="1"/>
</dbReference>
<dbReference type="Gene3D" id="2.10.60.10">
    <property type="entry name" value="CD59"/>
    <property type="match status" value="1"/>
</dbReference>
<dbReference type="Gene3D" id="3.30.200.20">
    <property type="entry name" value="Phosphorylase Kinase, domain 1"/>
    <property type="match status" value="1"/>
</dbReference>
<dbReference type="Gene3D" id="1.10.510.10">
    <property type="entry name" value="Transferase(Phosphotransferase) domain 1"/>
    <property type="match status" value="1"/>
</dbReference>
<dbReference type="InterPro" id="IPR000472">
    <property type="entry name" value="Activin_recp"/>
</dbReference>
<dbReference type="InterPro" id="IPR011009">
    <property type="entry name" value="Kinase-like_dom_sf"/>
</dbReference>
<dbReference type="InterPro" id="IPR000719">
    <property type="entry name" value="Prot_kinase_dom"/>
</dbReference>
<dbReference type="InterPro" id="IPR017441">
    <property type="entry name" value="Protein_kinase_ATP_BS"/>
</dbReference>
<dbReference type="InterPro" id="IPR045860">
    <property type="entry name" value="Snake_toxin-like_sf"/>
</dbReference>
<dbReference type="InterPro" id="IPR000333">
    <property type="entry name" value="TGFB_receptor"/>
</dbReference>
<dbReference type="PANTHER" id="PTHR23255:SF63">
    <property type="entry name" value="BONE MORPHOGENETIC PROTEIN RECEPTOR TYPE-2"/>
    <property type="match status" value="1"/>
</dbReference>
<dbReference type="PANTHER" id="PTHR23255">
    <property type="entry name" value="TRANSFORMING GROWTH FACTOR-BETA RECEPTOR TYPE I AND II"/>
    <property type="match status" value="1"/>
</dbReference>
<dbReference type="Pfam" id="PF01064">
    <property type="entry name" value="Activin_recp"/>
    <property type="match status" value="1"/>
</dbReference>
<dbReference type="Pfam" id="PF00069">
    <property type="entry name" value="Pkinase"/>
    <property type="match status" value="1"/>
</dbReference>
<dbReference type="SUPFAM" id="SSF56112">
    <property type="entry name" value="Protein kinase-like (PK-like)"/>
    <property type="match status" value="1"/>
</dbReference>
<dbReference type="SUPFAM" id="SSF57302">
    <property type="entry name" value="Snake toxin-like"/>
    <property type="match status" value="1"/>
</dbReference>
<dbReference type="PROSITE" id="PS00107">
    <property type="entry name" value="PROTEIN_KINASE_ATP"/>
    <property type="match status" value="1"/>
</dbReference>
<dbReference type="PROSITE" id="PS50011">
    <property type="entry name" value="PROTEIN_KINASE_DOM"/>
    <property type="match status" value="1"/>
</dbReference>
<proteinExistence type="evidence at protein level"/>